<protein>
    <recommendedName>
        <fullName evidence="1">Isoprenyl transferase</fullName>
        <ecNumber evidence="1">2.5.1.-</ecNumber>
    </recommendedName>
</protein>
<reference key="1">
    <citation type="journal article" date="2003" name="J. Bacteriol.">
        <title>Complete genome sequence of the oral pathogenic bacterium Porphyromonas gingivalis strain W83.</title>
        <authorList>
            <person name="Nelson K.E."/>
            <person name="Fleischmann R.D."/>
            <person name="DeBoy R.T."/>
            <person name="Paulsen I.T."/>
            <person name="Fouts D.E."/>
            <person name="Eisen J.A."/>
            <person name="Daugherty S.C."/>
            <person name="Dodson R.J."/>
            <person name="Durkin A.S."/>
            <person name="Gwinn M.L."/>
            <person name="Haft D.H."/>
            <person name="Kolonay J.F."/>
            <person name="Nelson W.C."/>
            <person name="Mason T.M."/>
            <person name="Tallon L."/>
            <person name="Gray J."/>
            <person name="Granger D."/>
            <person name="Tettelin H."/>
            <person name="Dong H."/>
            <person name="Galvin J.L."/>
            <person name="Duncan M.J."/>
            <person name="Dewhirst F.E."/>
            <person name="Fraser C.M."/>
        </authorList>
    </citation>
    <scope>NUCLEOTIDE SEQUENCE [LARGE SCALE GENOMIC DNA]</scope>
    <source>
        <strain>ATCC BAA-308 / W83</strain>
    </source>
</reference>
<accession>Q7MXJ4</accession>
<feature type="chain" id="PRO_0000123650" description="Isoprenyl transferase">
    <location>
        <begin position="1"/>
        <end position="254"/>
    </location>
</feature>
<feature type="active site" evidence="1">
    <location>
        <position position="23"/>
    </location>
</feature>
<feature type="active site" description="Proton acceptor" evidence="1">
    <location>
        <position position="71"/>
    </location>
</feature>
<feature type="binding site" evidence="1">
    <location>
        <position position="23"/>
    </location>
    <ligand>
        <name>Mg(2+)</name>
        <dbReference type="ChEBI" id="CHEBI:18420"/>
    </ligand>
</feature>
<feature type="binding site" evidence="1">
    <location>
        <begin position="24"/>
        <end position="27"/>
    </location>
    <ligand>
        <name>substrate</name>
    </ligand>
</feature>
<feature type="binding site" evidence="1">
    <location>
        <position position="28"/>
    </location>
    <ligand>
        <name>substrate</name>
    </ligand>
</feature>
<feature type="binding site" evidence="1">
    <location>
        <position position="36"/>
    </location>
    <ligand>
        <name>substrate</name>
    </ligand>
</feature>
<feature type="binding site" evidence="1">
    <location>
        <position position="40"/>
    </location>
    <ligand>
        <name>substrate</name>
    </ligand>
</feature>
<feature type="binding site" evidence="1">
    <location>
        <begin position="68"/>
        <end position="70"/>
    </location>
    <ligand>
        <name>substrate</name>
    </ligand>
</feature>
<feature type="binding site" evidence="1">
    <location>
        <position position="72"/>
    </location>
    <ligand>
        <name>substrate</name>
    </ligand>
</feature>
<feature type="binding site" evidence="1">
    <location>
        <position position="74"/>
    </location>
    <ligand>
        <name>substrate</name>
    </ligand>
</feature>
<feature type="binding site" evidence="1">
    <location>
        <position position="191"/>
    </location>
    <ligand>
        <name>substrate</name>
    </ligand>
</feature>
<feature type="binding site" evidence="1">
    <location>
        <begin position="197"/>
        <end position="199"/>
    </location>
    <ligand>
        <name>substrate</name>
    </ligand>
</feature>
<feature type="binding site" evidence="1">
    <location>
        <position position="210"/>
    </location>
    <ligand>
        <name>Mg(2+)</name>
        <dbReference type="ChEBI" id="CHEBI:18420"/>
    </ligand>
</feature>
<organism>
    <name type="scientific">Porphyromonas gingivalis (strain ATCC BAA-308 / W83)</name>
    <dbReference type="NCBI Taxonomy" id="242619"/>
    <lineage>
        <taxon>Bacteria</taxon>
        <taxon>Pseudomonadati</taxon>
        <taxon>Bacteroidota</taxon>
        <taxon>Bacteroidia</taxon>
        <taxon>Bacteroidales</taxon>
        <taxon>Porphyromonadaceae</taxon>
        <taxon>Porphyromonas</taxon>
    </lineage>
</organism>
<evidence type="ECO:0000255" key="1">
    <source>
        <dbReference type="HAMAP-Rule" id="MF_01139"/>
    </source>
</evidence>
<proteinExistence type="inferred from homology"/>
<name>ISPT_PORGI</name>
<dbReference type="EC" id="2.5.1.-" evidence="1"/>
<dbReference type="EMBL" id="AE015924">
    <property type="protein sequence ID" value="AAQ65424.1"/>
    <property type="molecule type" value="Genomic_DNA"/>
</dbReference>
<dbReference type="RefSeq" id="WP_005874722.1">
    <property type="nucleotide sequence ID" value="NC_002950.2"/>
</dbReference>
<dbReference type="SMR" id="Q7MXJ4"/>
<dbReference type="STRING" id="242619.PG_0190"/>
<dbReference type="EnsemblBacteria" id="AAQ65424">
    <property type="protein sequence ID" value="AAQ65424"/>
    <property type="gene ID" value="PG_0190"/>
</dbReference>
<dbReference type="KEGG" id="pgi:PG_0190"/>
<dbReference type="PATRIC" id="fig|242619.8.peg.178"/>
<dbReference type="eggNOG" id="COG0020">
    <property type="taxonomic scope" value="Bacteria"/>
</dbReference>
<dbReference type="HOGENOM" id="CLU_038505_1_1_10"/>
<dbReference type="BioCyc" id="PGIN242619:G1G02-179-MONOMER"/>
<dbReference type="Proteomes" id="UP000000588">
    <property type="component" value="Chromosome"/>
</dbReference>
<dbReference type="GO" id="GO:0045547">
    <property type="term" value="F:ditrans,polycis-polyprenyl diphosphate synthase [(2E,6E)-farnesyl diphosphate specific] activity"/>
    <property type="evidence" value="ECO:0007669"/>
    <property type="project" value="TreeGrafter"/>
</dbReference>
<dbReference type="GO" id="GO:0000287">
    <property type="term" value="F:magnesium ion binding"/>
    <property type="evidence" value="ECO:0007669"/>
    <property type="project" value="UniProtKB-UniRule"/>
</dbReference>
<dbReference type="GO" id="GO:0016094">
    <property type="term" value="P:polyprenol biosynthetic process"/>
    <property type="evidence" value="ECO:0007669"/>
    <property type="project" value="TreeGrafter"/>
</dbReference>
<dbReference type="CDD" id="cd00475">
    <property type="entry name" value="Cis_IPPS"/>
    <property type="match status" value="1"/>
</dbReference>
<dbReference type="FunFam" id="3.40.1180.10:FF:000001">
    <property type="entry name" value="(2E,6E)-farnesyl-diphosphate-specific ditrans,polycis-undecaprenyl-diphosphate synthase"/>
    <property type="match status" value="1"/>
</dbReference>
<dbReference type="Gene3D" id="3.40.1180.10">
    <property type="entry name" value="Decaprenyl diphosphate synthase-like"/>
    <property type="match status" value="1"/>
</dbReference>
<dbReference type="HAMAP" id="MF_01139">
    <property type="entry name" value="ISPT"/>
    <property type="match status" value="1"/>
</dbReference>
<dbReference type="InterPro" id="IPR001441">
    <property type="entry name" value="UPP_synth-like"/>
</dbReference>
<dbReference type="InterPro" id="IPR018520">
    <property type="entry name" value="UPP_synth-like_CS"/>
</dbReference>
<dbReference type="InterPro" id="IPR036424">
    <property type="entry name" value="UPP_synth-like_sf"/>
</dbReference>
<dbReference type="NCBIfam" id="NF011405">
    <property type="entry name" value="PRK14830.1"/>
    <property type="match status" value="1"/>
</dbReference>
<dbReference type="NCBIfam" id="TIGR00055">
    <property type="entry name" value="uppS"/>
    <property type="match status" value="1"/>
</dbReference>
<dbReference type="PANTHER" id="PTHR10291:SF0">
    <property type="entry name" value="DEHYDRODOLICHYL DIPHOSPHATE SYNTHASE 2"/>
    <property type="match status" value="1"/>
</dbReference>
<dbReference type="PANTHER" id="PTHR10291">
    <property type="entry name" value="DEHYDRODOLICHYL DIPHOSPHATE SYNTHASE FAMILY MEMBER"/>
    <property type="match status" value="1"/>
</dbReference>
<dbReference type="Pfam" id="PF01255">
    <property type="entry name" value="Prenyltransf"/>
    <property type="match status" value="1"/>
</dbReference>
<dbReference type="SUPFAM" id="SSF64005">
    <property type="entry name" value="Undecaprenyl diphosphate synthase"/>
    <property type="match status" value="1"/>
</dbReference>
<dbReference type="PROSITE" id="PS01066">
    <property type="entry name" value="UPP_SYNTHASE"/>
    <property type="match status" value="1"/>
</dbReference>
<comment type="function">
    <text evidence="1">Catalyzes the condensation of isopentenyl diphosphate (IPP) with allylic pyrophosphates generating different type of terpenoids.</text>
</comment>
<comment type="cofactor">
    <cofactor evidence="1">
        <name>Mg(2+)</name>
        <dbReference type="ChEBI" id="CHEBI:18420"/>
    </cofactor>
    <text evidence="1">Binds 2 magnesium ions per subunit.</text>
</comment>
<comment type="subunit">
    <text evidence="1">Homodimer.</text>
</comment>
<comment type="similarity">
    <text evidence="1">Belongs to the UPP synthase family.</text>
</comment>
<keyword id="KW-0460">Magnesium</keyword>
<keyword id="KW-0479">Metal-binding</keyword>
<keyword id="KW-1185">Reference proteome</keyword>
<keyword id="KW-0808">Transferase</keyword>
<gene>
    <name evidence="1" type="primary">uppS</name>
    <name type="ordered locus">PG_0190</name>
</gene>
<sequence length="254" mass="28615">MEGDGDKLQSAVIVPRHIALVMDGNGRWAKIRGKERCEGHAAGVDALRVALRAAAGCGVEYLTAYTFSTENWNRPEEEVRALMGLFVTAIMNEMLDLMTNNIRLLAIGDFSRLPEDVRESLEKGIRETAGNTGLTLVLALSYSSRWEMTDVIRRLARKVRDGSVEPEDINVDLVSDHLSTAGIPDPDLFIRTGGEKRISNFLMWQMAYTELFFTDTLWPDFDADCLKAAIEEYSSRERRFGKTSEQIALRENKY</sequence>